<evidence type="ECO:0000250" key="1">
    <source>
        <dbReference type="UniProtKB" id="Q96SL1"/>
    </source>
</evidence>
<evidence type="ECO:0000255" key="2"/>
<evidence type="ECO:0000256" key="3">
    <source>
        <dbReference type="SAM" id="MobiDB-lite"/>
    </source>
</evidence>
<evidence type="ECO:0000305" key="4"/>
<evidence type="ECO:0000312" key="5">
    <source>
        <dbReference type="RGD" id="1310939"/>
    </source>
</evidence>
<proteinExistence type="evidence at transcript level"/>
<protein>
    <recommendedName>
        <fullName evidence="4">Solute carrier family 49 member 4</fullName>
    </recommendedName>
    <alternativeName>
        <fullName>Disrupted in renal carcinoma protein 2 homolog</fullName>
    </alternativeName>
</protein>
<comment type="function">
    <text evidence="1">Mediates H(+)-dependent pyridoxine transport.</text>
</comment>
<comment type="catalytic activity">
    <reaction evidence="1">
        <text>pyridoxine(out) + n H(+)(out) = pyridoxine(in) + n H(+)(in)</text>
        <dbReference type="Rhea" id="RHEA:76203"/>
        <dbReference type="ChEBI" id="CHEBI:15378"/>
        <dbReference type="ChEBI" id="CHEBI:16709"/>
    </reaction>
</comment>
<comment type="subcellular location">
    <subcellularLocation>
        <location evidence="1">Lysosome membrane</location>
        <topology evidence="2">Multi-pass membrane protein</topology>
    </subcellularLocation>
</comment>
<comment type="PTM">
    <text evidence="1">Cleaved in lysosomes by cathepsin L between Leu-214 and Ala-261, generating a N-glycosylated N-terminal and a non-glycosylated C-terminal fragment.</text>
</comment>
<comment type="similarity">
    <text evidence="4">Belongs to the major facilitator superfamily.</text>
</comment>
<organism>
    <name type="scientific">Rattus norvegicus</name>
    <name type="common">Rat</name>
    <dbReference type="NCBI Taxonomy" id="10116"/>
    <lineage>
        <taxon>Eukaryota</taxon>
        <taxon>Metazoa</taxon>
        <taxon>Chordata</taxon>
        <taxon>Craniata</taxon>
        <taxon>Vertebrata</taxon>
        <taxon>Euteleostomi</taxon>
        <taxon>Mammalia</taxon>
        <taxon>Eutheria</taxon>
        <taxon>Euarchontoglires</taxon>
        <taxon>Glires</taxon>
        <taxon>Rodentia</taxon>
        <taxon>Myomorpha</taxon>
        <taxon>Muroidea</taxon>
        <taxon>Muridae</taxon>
        <taxon>Murinae</taxon>
        <taxon>Rattus</taxon>
    </lineage>
</organism>
<accession>Q66H95</accession>
<name>DIRC2_RAT</name>
<keyword id="KW-0325">Glycoprotein</keyword>
<keyword id="KW-0458">Lysosome</keyword>
<keyword id="KW-0472">Membrane</keyword>
<keyword id="KW-1185">Reference proteome</keyword>
<keyword id="KW-0812">Transmembrane</keyword>
<keyword id="KW-1133">Transmembrane helix</keyword>
<keyword id="KW-0813">Transport</keyword>
<gene>
    <name type="primary">Slc49a4</name>
    <name evidence="5" type="synonym">Dirc2</name>
</gene>
<reference key="1">
    <citation type="journal article" date="2004" name="Genome Res.">
        <title>The status, quality, and expansion of the NIH full-length cDNA project: the Mammalian Gene Collection (MGC).</title>
        <authorList>
            <consortium name="The MGC Project Team"/>
        </authorList>
    </citation>
    <scope>NUCLEOTIDE SEQUENCE [LARGE SCALE MRNA]</scope>
    <source>
        <tissue>Lung</tissue>
    </source>
</reference>
<sequence length="478" mass="52030">MGSGWSSEEEERQPLLGPGLGPAPGATRRGREAAAVLPAAGPSPGRVYGRRWLVLLLFSLLAFAQGLVWNTWGPIQNSARQAYSFTGWDIALLVLWGPIGFLPCFAFMWLLDKRGLRITVLLTSFLMVLGTGLRCIPVSDLTLKKRLIHGGQILNGLAGPTVMNAAPFLSTTWFSADERATATAIASMLSYLGGACAFLVGPLVVPAPNGTAPLLTAESSRDHIKDRIETVLYAEFGVVCLIFSATLAYFPPRPPLPPSVAAASQRLSYRRSFCRLLSNLRFLMIALAYAIPLGVFAGWSGVLDLILTPVHVSQVDAGWIGFWSIVGGCVVGIAMARFADFIRGMLKLILLLLFSGATLSSTWFTLTCLNSVTHLPLTTVTLYASCILLGVFLNSSVPIFFELFVETVYPVPEGITCGVVTFLSNMFMGVLLFFVTFYHTELSWFNWCLPGSCLLSLLLILCFRESYDRLYLDVVVSV</sequence>
<feature type="chain" id="PRO_0000271340" description="Solute carrier family 49 member 4">
    <location>
        <begin position="1"/>
        <end position="478"/>
    </location>
</feature>
<feature type="topological domain" description="Cytoplasmic" evidence="2">
    <location>
        <begin position="1"/>
        <end position="51"/>
    </location>
</feature>
<feature type="transmembrane region" description="Helical" evidence="2">
    <location>
        <begin position="52"/>
        <end position="72"/>
    </location>
</feature>
<feature type="topological domain" description="Lumenal" evidence="2">
    <location>
        <begin position="73"/>
        <end position="89"/>
    </location>
</feature>
<feature type="transmembrane region" description="Helical" evidence="2">
    <location>
        <begin position="90"/>
        <end position="110"/>
    </location>
</feature>
<feature type="topological domain" description="Cytoplasmic" evidence="2">
    <location>
        <begin position="111"/>
        <end position="117"/>
    </location>
</feature>
<feature type="transmembrane region" description="Helical" evidence="2">
    <location>
        <begin position="118"/>
        <end position="138"/>
    </location>
</feature>
<feature type="topological domain" description="Lumenal" evidence="2">
    <location>
        <begin position="139"/>
        <end position="152"/>
    </location>
</feature>
<feature type="transmembrane region" description="Helical" evidence="2">
    <location>
        <begin position="153"/>
        <end position="173"/>
    </location>
</feature>
<feature type="topological domain" description="Cytoplasmic" evidence="2">
    <location>
        <begin position="174"/>
        <end position="184"/>
    </location>
</feature>
<feature type="transmembrane region" description="Helical" evidence="2">
    <location>
        <begin position="185"/>
        <end position="205"/>
    </location>
</feature>
<feature type="topological domain" description="Lumenal" evidence="2">
    <location>
        <begin position="206"/>
        <end position="229"/>
    </location>
</feature>
<feature type="transmembrane region" description="Helical" evidence="2">
    <location>
        <begin position="230"/>
        <end position="250"/>
    </location>
</feature>
<feature type="topological domain" description="Cytoplasmic" evidence="2">
    <location>
        <begin position="251"/>
        <end position="281"/>
    </location>
</feature>
<feature type="transmembrane region" description="Helical" evidence="2">
    <location>
        <begin position="282"/>
        <end position="302"/>
    </location>
</feature>
<feature type="topological domain" description="Lumenal" evidence="2">
    <location>
        <begin position="303"/>
        <end position="314"/>
    </location>
</feature>
<feature type="transmembrane region" description="Helical" evidence="2">
    <location>
        <begin position="315"/>
        <end position="335"/>
    </location>
</feature>
<feature type="topological domain" description="Cytoplasmic" evidence="2">
    <location>
        <begin position="336"/>
        <end position="347"/>
    </location>
</feature>
<feature type="transmembrane region" description="Helical" evidence="2">
    <location>
        <begin position="348"/>
        <end position="368"/>
    </location>
</feature>
<feature type="topological domain" description="Lumenal" evidence="2">
    <location>
        <begin position="369"/>
        <end position="384"/>
    </location>
</feature>
<feature type="transmembrane region" description="Helical" evidence="2">
    <location>
        <begin position="385"/>
        <end position="405"/>
    </location>
</feature>
<feature type="topological domain" description="Cytoplasmic" evidence="2">
    <location>
        <begin position="406"/>
        <end position="414"/>
    </location>
</feature>
<feature type="transmembrane region" description="Helical" evidence="2">
    <location>
        <begin position="415"/>
        <end position="435"/>
    </location>
</feature>
<feature type="topological domain" description="Lumenal" evidence="2">
    <location>
        <begin position="436"/>
        <end position="442"/>
    </location>
</feature>
<feature type="transmembrane region" description="Helical" evidence="2">
    <location>
        <begin position="443"/>
        <end position="463"/>
    </location>
</feature>
<feature type="topological domain" description="Cytoplasmic" evidence="2">
    <location>
        <begin position="464"/>
        <end position="478"/>
    </location>
</feature>
<feature type="region of interest" description="Disordered" evidence="3">
    <location>
        <begin position="1"/>
        <end position="27"/>
    </location>
</feature>
<feature type="short sequence motif" description="Di-leucine motif; mediates lysosomal localization" evidence="1">
    <location>
        <begin position="15"/>
        <end position="16"/>
    </location>
</feature>
<feature type="glycosylation site" description="N-linked (GlcNAc...) asparagine" evidence="2">
    <location>
        <position position="209"/>
    </location>
</feature>
<dbReference type="EMBL" id="BC081960">
    <property type="protein sequence ID" value="AAH81960.1"/>
    <property type="molecule type" value="mRNA"/>
</dbReference>
<dbReference type="RefSeq" id="NP_001012017.1">
    <property type="nucleotide sequence ID" value="NM_001012017.1"/>
</dbReference>
<dbReference type="SMR" id="Q66H95"/>
<dbReference type="FunCoup" id="Q66H95">
    <property type="interactions" value="710"/>
</dbReference>
<dbReference type="STRING" id="10116.ENSRNOP00000003048"/>
<dbReference type="GlyCosmos" id="Q66H95">
    <property type="glycosylation" value="1 site, No reported glycans"/>
</dbReference>
<dbReference type="GlyGen" id="Q66H95">
    <property type="glycosylation" value="1 site"/>
</dbReference>
<dbReference type="PhosphoSitePlus" id="Q66H95"/>
<dbReference type="jPOST" id="Q66H95"/>
<dbReference type="PaxDb" id="10116-ENSRNOP00000003048"/>
<dbReference type="Ensembl" id="ENSRNOT00000003048.6">
    <property type="protein sequence ID" value="ENSRNOP00000003048.4"/>
    <property type="gene ID" value="ENSRNOG00000002240.6"/>
</dbReference>
<dbReference type="GeneID" id="303902"/>
<dbReference type="KEGG" id="rno:303902"/>
<dbReference type="UCSC" id="RGD:1310939">
    <property type="organism name" value="rat"/>
</dbReference>
<dbReference type="AGR" id="RGD:1310939"/>
<dbReference type="CTD" id="84925"/>
<dbReference type="RGD" id="1310939">
    <property type="gene designation" value="Slc49a4"/>
</dbReference>
<dbReference type="eggNOG" id="KOG2563">
    <property type="taxonomic scope" value="Eukaryota"/>
</dbReference>
<dbReference type="GeneTree" id="ENSGT01030000234625"/>
<dbReference type="HOGENOM" id="CLU_023132_4_1_1"/>
<dbReference type="InParanoid" id="Q66H95"/>
<dbReference type="OMA" id="VCFRESY"/>
<dbReference type="OrthoDB" id="422206at2759"/>
<dbReference type="PhylomeDB" id="Q66H95"/>
<dbReference type="TreeFam" id="TF314292"/>
<dbReference type="PRO" id="PR:Q66H95"/>
<dbReference type="Proteomes" id="UP000002494">
    <property type="component" value="Chromosome 11"/>
</dbReference>
<dbReference type="Bgee" id="ENSRNOG00000002240">
    <property type="expression patterns" value="Expressed in skeletal muscle tissue and 19 other cell types or tissues"/>
</dbReference>
<dbReference type="GO" id="GO:0043231">
    <property type="term" value="C:intracellular membrane-bounded organelle"/>
    <property type="evidence" value="ECO:0000318"/>
    <property type="project" value="GO_Central"/>
</dbReference>
<dbReference type="GO" id="GO:0005765">
    <property type="term" value="C:lysosomal membrane"/>
    <property type="evidence" value="ECO:0000250"/>
    <property type="project" value="UniProtKB"/>
</dbReference>
<dbReference type="GO" id="GO:0016020">
    <property type="term" value="C:membrane"/>
    <property type="evidence" value="ECO:0000318"/>
    <property type="project" value="GO_Central"/>
</dbReference>
<dbReference type="GO" id="GO:0022857">
    <property type="term" value="F:transmembrane transporter activity"/>
    <property type="evidence" value="ECO:0007669"/>
    <property type="project" value="InterPro"/>
</dbReference>
<dbReference type="GO" id="GO:0031923">
    <property type="term" value="P:pyridoxine transport"/>
    <property type="evidence" value="ECO:0000250"/>
    <property type="project" value="UniProtKB"/>
</dbReference>
<dbReference type="CDD" id="cd17397">
    <property type="entry name" value="MFS_DIRC2"/>
    <property type="match status" value="1"/>
</dbReference>
<dbReference type="FunFam" id="1.20.1250.20:FF:000162">
    <property type="entry name" value="disrupted in renal carcinoma protein 2"/>
    <property type="match status" value="1"/>
</dbReference>
<dbReference type="Gene3D" id="1.20.1250.20">
    <property type="entry name" value="MFS general substrate transporter like domains"/>
    <property type="match status" value="1"/>
</dbReference>
<dbReference type="InterPro" id="IPR049680">
    <property type="entry name" value="FLVCR1-2_SLC49-like"/>
</dbReference>
<dbReference type="InterPro" id="IPR011701">
    <property type="entry name" value="MFS"/>
</dbReference>
<dbReference type="InterPro" id="IPR036259">
    <property type="entry name" value="MFS_trans_sf"/>
</dbReference>
<dbReference type="InterPro" id="IPR049604">
    <property type="entry name" value="SLC49A4-like"/>
</dbReference>
<dbReference type="PANTHER" id="PTHR10924">
    <property type="entry name" value="MAJOR FACILITATOR SUPERFAMILY PROTEIN-RELATED"/>
    <property type="match status" value="1"/>
</dbReference>
<dbReference type="PANTHER" id="PTHR10924:SF27">
    <property type="entry name" value="SOLUTE CARRIER FAMILY 49 MEMBER 4"/>
    <property type="match status" value="1"/>
</dbReference>
<dbReference type="Pfam" id="PF07690">
    <property type="entry name" value="MFS_1"/>
    <property type="match status" value="1"/>
</dbReference>
<dbReference type="SUPFAM" id="SSF103473">
    <property type="entry name" value="MFS general substrate transporter"/>
    <property type="match status" value="1"/>
</dbReference>